<reference key="1">
    <citation type="journal article" date="2000" name="Nature">
        <title>The complete sequence of the mucosal pathogen Ureaplasma urealyticum.</title>
        <authorList>
            <person name="Glass J.I."/>
            <person name="Lefkowitz E.J."/>
            <person name="Glass J.S."/>
            <person name="Heiner C.R."/>
            <person name="Chen E.Y."/>
            <person name="Cassell G.H."/>
        </authorList>
    </citation>
    <scope>NUCLEOTIDE SEQUENCE [LARGE SCALE GENOMIC DNA]</scope>
    <source>
        <strain>ATCC 700970</strain>
    </source>
</reference>
<dbReference type="EMBL" id="AF222894">
    <property type="protein sequence ID" value="AAF30903.1"/>
    <property type="status" value="ALT_INIT"/>
    <property type="molecule type" value="Genomic_DNA"/>
</dbReference>
<dbReference type="PIR" id="B82884">
    <property type="entry name" value="B82884"/>
</dbReference>
<dbReference type="RefSeq" id="WP_006688444.1">
    <property type="nucleotide sequence ID" value="NC_002162.1"/>
</dbReference>
<dbReference type="SMR" id="Q9PPZ9"/>
<dbReference type="STRING" id="273119.UU491"/>
<dbReference type="EnsemblBacteria" id="AAF30903">
    <property type="protein sequence ID" value="AAF30903"/>
    <property type="gene ID" value="UU491"/>
</dbReference>
<dbReference type="GeneID" id="29672538"/>
<dbReference type="KEGG" id="uur:UU491"/>
<dbReference type="eggNOG" id="COG1159">
    <property type="taxonomic scope" value="Bacteria"/>
</dbReference>
<dbReference type="HOGENOM" id="CLU_038009_1_0_14"/>
<dbReference type="OrthoDB" id="9805918at2"/>
<dbReference type="Proteomes" id="UP000000423">
    <property type="component" value="Chromosome"/>
</dbReference>
<dbReference type="GO" id="GO:0005829">
    <property type="term" value="C:cytosol"/>
    <property type="evidence" value="ECO:0007669"/>
    <property type="project" value="TreeGrafter"/>
</dbReference>
<dbReference type="GO" id="GO:0005886">
    <property type="term" value="C:plasma membrane"/>
    <property type="evidence" value="ECO:0007669"/>
    <property type="project" value="UniProtKB-SubCell"/>
</dbReference>
<dbReference type="GO" id="GO:0005525">
    <property type="term" value="F:GTP binding"/>
    <property type="evidence" value="ECO:0007669"/>
    <property type="project" value="UniProtKB-UniRule"/>
</dbReference>
<dbReference type="GO" id="GO:0003924">
    <property type="term" value="F:GTPase activity"/>
    <property type="evidence" value="ECO:0007669"/>
    <property type="project" value="UniProtKB-UniRule"/>
</dbReference>
<dbReference type="GO" id="GO:0043024">
    <property type="term" value="F:ribosomal small subunit binding"/>
    <property type="evidence" value="ECO:0007669"/>
    <property type="project" value="TreeGrafter"/>
</dbReference>
<dbReference type="GO" id="GO:0070181">
    <property type="term" value="F:small ribosomal subunit rRNA binding"/>
    <property type="evidence" value="ECO:0007669"/>
    <property type="project" value="UniProtKB-UniRule"/>
</dbReference>
<dbReference type="GO" id="GO:0000028">
    <property type="term" value="P:ribosomal small subunit assembly"/>
    <property type="evidence" value="ECO:0007669"/>
    <property type="project" value="TreeGrafter"/>
</dbReference>
<dbReference type="CDD" id="cd04163">
    <property type="entry name" value="Era"/>
    <property type="match status" value="1"/>
</dbReference>
<dbReference type="CDD" id="cd22534">
    <property type="entry name" value="KH-II_Era"/>
    <property type="match status" value="1"/>
</dbReference>
<dbReference type="Gene3D" id="3.30.300.20">
    <property type="match status" value="1"/>
</dbReference>
<dbReference type="Gene3D" id="3.40.50.300">
    <property type="entry name" value="P-loop containing nucleotide triphosphate hydrolases"/>
    <property type="match status" value="1"/>
</dbReference>
<dbReference type="HAMAP" id="MF_00367">
    <property type="entry name" value="GTPase_Era"/>
    <property type="match status" value="1"/>
</dbReference>
<dbReference type="InterPro" id="IPR030388">
    <property type="entry name" value="G_ERA_dom"/>
</dbReference>
<dbReference type="InterPro" id="IPR006073">
    <property type="entry name" value="GTP-bd"/>
</dbReference>
<dbReference type="InterPro" id="IPR005662">
    <property type="entry name" value="GTPase_Era-like"/>
</dbReference>
<dbReference type="InterPro" id="IPR015946">
    <property type="entry name" value="KH_dom-like_a/b"/>
</dbReference>
<dbReference type="InterPro" id="IPR004044">
    <property type="entry name" value="KH_dom_type_2"/>
</dbReference>
<dbReference type="InterPro" id="IPR009019">
    <property type="entry name" value="KH_sf_prok-type"/>
</dbReference>
<dbReference type="InterPro" id="IPR027417">
    <property type="entry name" value="P-loop_NTPase"/>
</dbReference>
<dbReference type="InterPro" id="IPR005225">
    <property type="entry name" value="Small_GTP-bd"/>
</dbReference>
<dbReference type="NCBIfam" id="TIGR00436">
    <property type="entry name" value="era"/>
    <property type="match status" value="1"/>
</dbReference>
<dbReference type="NCBIfam" id="NF000908">
    <property type="entry name" value="PRK00089.1"/>
    <property type="match status" value="1"/>
</dbReference>
<dbReference type="NCBIfam" id="TIGR00231">
    <property type="entry name" value="small_GTP"/>
    <property type="match status" value="1"/>
</dbReference>
<dbReference type="PANTHER" id="PTHR42698">
    <property type="entry name" value="GTPASE ERA"/>
    <property type="match status" value="1"/>
</dbReference>
<dbReference type="PANTHER" id="PTHR42698:SF1">
    <property type="entry name" value="GTPASE ERA, MITOCHONDRIAL"/>
    <property type="match status" value="1"/>
</dbReference>
<dbReference type="Pfam" id="PF07650">
    <property type="entry name" value="KH_2"/>
    <property type="match status" value="1"/>
</dbReference>
<dbReference type="Pfam" id="PF01926">
    <property type="entry name" value="MMR_HSR1"/>
    <property type="match status" value="1"/>
</dbReference>
<dbReference type="SUPFAM" id="SSF52540">
    <property type="entry name" value="P-loop containing nucleoside triphosphate hydrolases"/>
    <property type="match status" value="1"/>
</dbReference>
<dbReference type="SUPFAM" id="SSF54814">
    <property type="entry name" value="Prokaryotic type KH domain (KH-domain type II)"/>
    <property type="match status" value="1"/>
</dbReference>
<dbReference type="PROSITE" id="PS51713">
    <property type="entry name" value="G_ERA"/>
    <property type="match status" value="1"/>
</dbReference>
<dbReference type="PROSITE" id="PS50823">
    <property type="entry name" value="KH_TYPE_2"/>
    <property type="match status" value="1"/>
</dbReference>
<accession>Q9PPZ9</accession>
<keyword id="KW-1003">Cell membrane</keyword>
<keyword id="KW-0963">Cytoplasm</keyword>
<keyword id="KW-0342">GTP-binding</keyword>
<keyword id="KW-0472">Membrane</keyword>
<keyword id="KW-0547">Nucleotide-binding</keyword>
<keyword id="KW-1185">Reference proteome</keyword>
<keyword id="KW-0690">Ribosome biogenesis</keyword>
<keyword id="KW-0694">RNA-binding</keyword>
<keyword id="KW-0699">rRNA-binding</keyword>
<sequence>MIKKYGIVAIVGKPNVGKSTLINAIMKKKVSIISNKPQTTRNAVKEIYEDDESAIIFTDTPGFHEPSNKLDLFLNHEIEISYKEANVILFVTTMDKELDANDFEIINLIKEANKENIILVISKAEMAKNQDQIDERIHFLKKHIAFKDVVQISALHVINIDKLINTIKNYLHKDVVTDYFRQKAEKEDKFVITEIIREQCLLNLNHEVPHGVGVEIDESKYNQEANHWIIKASIIIEKNSHKPIIIGQNGTMIKKISMGARKQLHEIYDCHISLTIFVKVENNWRDNNNIIKSLGYKIKK</sequence>
<gene>
    <name evidence="1" type="primary">era</name>
    <name type="ordered locus">UU491</name>
</gene>
<feature type="chain" id="PRO_0000180069" description="GTPase Era">
    <location>
        <begin position="1"/>
        <end position="300"/>
    </location>
</feature>
<feature type="domain" description="Era-type G" evidence="2">
    <location>
        <begin position="4"/>
        <end position="173"/>
    </location>
</feature>
<feature type="domain" description="KH type-2" evidence="1">
    <location>
        <begin position="204"/>
        <end position="282"/>
    </location>
</feature>
<feature type="region of interest" description="G1" evidence="2">
    <location>
        <begin position="12"/>
        <end position="19"/>
    </location>
</feature>
<feature type="region of interest" description="G2" evidence="2">
    <location>
        <begin position="38"/>
        <end position="42"/>
    </location>
</feature>
<feature type="region of interest" description="G3" evidence="2">
    <location>
        <begin position="59"/>
        <end position="62"/>
    </location>
</feature>
<feature type="region of interest" description="G4" evidence="2">
    <location>
        <begin position="122"/>
        <end position="125"/>
    </location>
</feature>
<feature type="region of interest" description="G5" evidence="2">
    <location>
        <begin position="152"/>
        <end position="154"/>
    </location>
</feature>
<feature type="binding site" evidence="1">
    <location>
        <begin position="12"/>
        <end position="19"/>
    </location>
    <ligand>
        <name>GTP</name>
        <dbReference type="ChEBI" id="CHEBI:37565"/>
    </ligand>
</feature>
<feature type="binding site" evidence="1">
    <location>
        <begin position="59"/>
        <end position="63"/>
    </location>
    <ligand>
        <name>GTP</name>
        <dbReference type="ChEBI" id="CHEBI:37565"/>
    </ligand>
</feature>
<feature type="binding site" evidence="1">
    <location>
        <begin position="122"/>
        <end position="125"/>
    </location>
    <ligand>
        <name>GTP</name>
        <dbReference type="ChEBI" id="CHEBI:37565"/>
    </ligand>
</feature>
<comment type="function">
    <text evidence="1">An essential GTPase that binds both GDP and GTP, with rapid nucleotide exchange. Plays a role in 16S rRNA processing and 30S ribosomal subunit biogenesis and possibly also in cell cycle regulation and energy metabolism.</text>
</comment>
<comment type="subunit">
    <text evidence="1">Monomer.</text>
</comment>
<comment type="subcellular location">
    <subcellularLocation>
        <location>Cytoplasm</location>
    </subcellularLocation>
    <subcellularLocation>
        <location evidence="1">Cell membrane</location>
        <topology evidence="1">Peripheral membrane protein</topology>
    </subcellularLocation>
</comment>
<comment type="similarity">
    <text evidence="1 2">Belongs to the TRAFAC class TrmE-Era-EngA-EngB-Septin-like GTPase superfamily. Era GTPase family.</text>
</comment>
<comment type="sequence caution" evidence="3">
    <conflict type="erroneous initiation">
        <sequence resource="EMBL-CDS" id="AAF30903"/>
    </conflict>
    <text>Extended N-terminus.</text>
</comment>
<name>ERA_UREPA</name>
<protein>
    <recommendedName>
        <fullName evidence="1">GTPase Era</fullName>
    </recommendedName>
</protein>
<organism>
    <name type="scientific">Ureaplasma parvum serovar 3 (strain ATCC 700970)</name>
    <dbReference type="NCBI Taxonomy" id="273119"/>
    <lineage>
        <taxon>Bacteria</taxon>
        <taxon>Bacillati</taxon>
        <taxon>Mycoplasmatota</taxon>
        <taxon>Mycoplasmoidales</taxon>
        <taxon>Mycoplasmoidaceae</taxon>
        <taxon>Ureaplasma</taxon>
    </lineage>
</organism>
<proteinExistence type="inferred from homology"/>
<evidence type="ECO:0000255" key="1">
    <source>
        <dbReference type="HAMAP-Rule" id="MF_00367"/>
    </source>
</evidence>
<evidence type="ECO:0000255" key="2">
    <source>
        <dbReference type="PROSITE-ProRule" id="PRU01050"/>
    </source>
</evidence>
<evidence type="ECO:0000305" key="3"/>